<accession>O22199</accession>
<accession>Q8RY38</accession>
<proteinExistence type="evidence at transcript level"/>
<feature type="chain" id="PRO_0000423359" description="Phosphatidylinositol 4-kinase gamma 1">
    <location>
        <begin position="1"/>
        <end position="561"/>
    </location>
</feature>
<feature type="domain" description="PI3K/PI4K catalytic" evidence="3">
    <location>
        <begin position="121"/>
        <end position="416"/>
    </location>
</feature>
<feature type="region of interest" description="G-loop" evidence="3">
    <location>
        <begin position="127"/>
        <end position="133"/>
    </location>
</feature>
<feature type="region of interest" description="Catalytic loop" evidence="3">
    <location>
        <begin position="266"/>
        <end position="274"/>
    </location>
</feature>
<feature type="region of interest" description="Activation loop" evidence="3">
    <location>
        <begin position="296"/>
        <end position="322"/>
    </location>
</feature>
<feature type="region of interest" description="Disordered" evidence="4">
    <location>
        <begin position="456"/>
        <end position="520"/>
    </location>
</feature>
<feature type="compositionally biased region" description="Polar residues" evidence="4">
    <location>
        <begin position="467"/>
        <end position="484"/>
    </location>
</feature>
<feature type="binding site" evidence="2">
    <location>
        <begin position="128"/>
        <end position="134"/>
    </location>
    <ligand>
        <name>ATP</name>
        <dbReference type="ChEBI" id="CHEBI:30616"/>
    </ligand>
</feature>
<feature type="binding site" evidence="2">
    <location>
        <position position="149"/>
    </location>
    <ligand>
        <name>ATP</name>
        <dbReference type="ChEBI" id="CHEBI:30616"/>
    </ligand>
</feature>
<feature type="binding site" evidence="2">
    <location>
        <begin position="233"/>
        <end position="236"/>
    </location>
    <ligand>
        <name>ATP</name>
        <dbReference type="ChEBI" id="CHEBI:30616"/>
    </ligand>
</feature>
<feature type="binding site" evidence="2">
    <location>
        <position position="298"/>
    </location>
    <ligand>
        <name>ATP</name>
        <dbReference type="ChEBI" id="CHEBI:30616"/>
    </ligand>
</feature>
<feature type="sequence conflict" description="In Ref. 3; AAL84930." evidence="5" ref="3">
    <original>L</original>
    <variation>S</variation>
    <location>
        <position position="232"/>
    </location>
</feature>
<feature type="sequence conflict" description="In Ref. 3; AAL84930." evidence="5" ref="3">
    <original>R</original>
    <variation>K</variation>
    <location>
        <position position="357"/>
    </location>
</feature>
<feature type="sequence conflict" description="In Ref. 3; AAL84930." evidence="5" ref="3">
    <location>
        <position position="517"/>
    </location>
</feature>
<evidence type="ECO:0000250" key="1"/>
<evidence type="ECO:0000250" key="2">
    <source>
        <dbReference type="UniProtKB" id="Q9BTU6"/>
    </source>
</evidence>
<evidence type="ECO:0000255" key="3">
    <source>
        <dbReference type="PROSITE-ProRule" id="PRU00269"/>
    </source>
</evidence>
<evidence type="ECO:0000256" key="4">
    <source>
        <dbReference type="SAM" id="MobiDB-lite"/>
    </source>
</evidence>
<evidence type="ECO:0000305" key="5"/>
<gene>
    <name type="primary">PI4KG1</name>
    <name type="synonym">PI4KGAMMA1</name>
    <name type="ordered locus">At2g40850</name>
    <name type="ORF">T20B5.5</name>
</gene>
<protein>
    <recommendedName>
        <fullName>Phosphatidylinositol 4-kinase gamma 1</fullName>
        <shortName>AtPI4Kgamma1</shortName>
        <shortName>PI-4Kgamma1</shortName>
        <shortName>PI4K gamma 1</shortName>
        <ecNumber>2.7.1.67</ecNumber>
    </recommendedName>
</protein>
<reference key="1">
    <citation type="journal article" date="1999" name="Nature">
        <title>Sequence and analysis of chromosome 2 of the plant Arabidopsis thaliana.</title>
        <authorList>
            <person name="Lin X."/>
            <person name="Kaul S."/>
            <person name="Rounsley S.D."/>
            <person name="Shea T.P."/>
            <person name="Benito M.-I."/>
            <person name="Town C.D."/>
            <person name="Fujii C.Y."/>
            <person name="Mason T.M."/>
            <person name="Bowman C.L."/>
            <person name="Barnstead M.E."/>
            <person name="Feldblyum T.V."/>
            <person name="Buell C.R."/>
            <person name="Ketchum K.A."/>
            <person name="Lee J.J."/>
            <person name="Ronning C.M."/>
            <person name="Koo H.L."/>
            <person name="Moffat K.S."/>
            <person name="Cronin L.A."/>
            <person name="Shen M."/>
            <person name="Pai G."/>
            <person name="Van Aken S."/>
            <person name="Umayam L."/>
            <person name="Tallon L.J."/>
            <person name="Gill J.E."/>
            <person name="Adams M.D."/>
            <person name="Carrera A.J."/>
            <person name="Creasy T.H."/>
            <person name="Goodman H.M."/>
            <person name="Somerville C.R."/>
            <person name="Copenhaver G.P."/>
            <person name="Preuss D."/>
            <person name="Nierman W.C."/>
            <person name="White O."/>
            <person name="Eisen J.A."/>
            <person name="Salzberg S.L."/>
            <person name="Fraser C.M."/>
            <person name="Venter J.C."/>
        </authorList>
    </citation>
    <scope>NUCLEOTIDE SEQUENCE [LARGE SCALE GENOMIC DNA]</scope>
    <source>
        <strain>cv. Columbia</strain>
    </source>
</reference>
<reference key="2">
    <citation type="journal article" date="2017" name="Plant J.">
        <title>Araport11: a complete reannotation of the Arabidopsis thaliana reference genome.</title>
        <authorList>
            <person name="Cheng C.Y."/>
            <person name="Krishnakumar V."/>
            <person name="Chan A.P."/>
            <person name="Thibaud-Nissen F."/>
            <person name="Schobel S."/>
            <person name="Town C.D."/>
        </authorList>
    </citation>
    <scope>GENOME REANNOTATION</scope>
    <source>
        <strain>cv. Columbia</strain>
    </source>
</reference>
<reference key="3">
    <citation type="journal article" date="2003" name="Science">
        <title>Empirical analysis of transcriptional activity in the Arabidopsis genome.</title>
        <authorList>
            <person name="Yamada K."/>
            <person name="Lim J."/>
            <person name="Dale J.M."/>
            <person name="Chen H."/>
            <person name="Shinn P."/>
            <person name="Palm C.J."/>
            <person name="Southwick A.M."/>
            <person name="Wu H.C."/>
            <person name="Kim C.J."/>
            <person name="Nguyen M."/>
            <person name="Pham P.K."/>
            <person name="Cheuk R.F."/>
            <person name="Karlin-Newmann G."/>
            <person name="Liu S.X."/>
            <person name="Lam B."/>
            <person name="Sakano H."/>
            <person name="Wu T."/>
            <person name="Yu G."/>
            <person name="Miranda M."/>
            <person name="Quach H.L."/>
            <person name="Tripp M."/>
            <person name="Chang C.H."/>
            <person name="Lee J.M."/>
            <person name="Toriumi M.J."/>
            <person name="Chan M.M."/>
            <person name="Tang C.C."/>
            <person name="Onodera C.S."/>
            <person name="Deng J.M."/>
            <person name="Akiyama K."/>
            <person name="Ansari Y."/>
            <person name="Arakawa T."/>
            <person name="Banh J."/>
            <person name="Banno F."/>
            <person name="Bowser L."/>
            <person name="Brooks S.Y."/>
            <person name="Carninci P."/>
            <person name="Chao Q."/>
            <person name="Choy N."/>
            <person name="Enju A."/>
            <person name="Goldsmith A.D."/>
            <person name="Gurjal M."/>
            <person name="Hansen N.F."/>
            <person name="Hayashizaki Y."/>
            <person name="Johnson-Hopson C."/>
            <person name="Hsuan V.W."/>
            <person name="Iida K."/>
            <person name="Karnes M."/>
            <person name="Khan S."/>
            <person name="Koesema E."/>
            <person name="Ishida J."/>
            <person name="Jiang P.X."/>
            <person name="Jones T."/>
            <person name="Kawai J."/>
            <person name="Kamiya A."/>
            <person name="Meyers C."/>
            <person name="Nakajima M."/>
            <person name="Narusaka M."/>
            <person name="Seki M."/>
            <person name="Sakurai T."/>
            <person name="Satou M."/>
            <person name="Tamse R."/>
            <person name="Vaysberg M."/>
            <person name="Wallender E.K."/>
            <person name="Wong C."/>
            <person name="Yamamura Y."/>
            <person name="Yuan S."/>
            <person name="Shinozaki K."/>
            <person name="Davis R.W."/>
            <person name="Theologis A."/>
            <person name="Ecker J.R."/>
        </authorList>
    </citation>
    <scope>NUCLEOTIDE SEQUENCE [LARGE SCALE MRNA]</scope>
    <source>
        <strain>cv. Columbia</strain>
    </source>
</reference>
<reference key="4">
    <citation type="journal article" date="2002" name="Plant Physiol.">
        <title>Inositol phospholipid metabolism in Arabidopsis. Characterized and putative isoforms of inositol phospholipid kinase and phosphoinositide-specific phospholipase C.</title>
        <authorList>
            <person name="Mueller-Roeber B."/>
            <person name="Pical C."/>
        </authorList>
    </citation>
    <scope>GENE FAMILY</scope>
    <scope>NOMENCLATURE</scope>
</reference>
<reference key="5">
    <citation type="journal article" date="2008" name="Biochem. J.">
        <title>Characterization of a new family of protein kinases from Arabidopsis containing phosphoinositide 3/4-kinase and ubiquitin-like domains.</title>
        <authorList>
            <person name="Galvao R.M."/>
            <person name="Kota U."/>
            <person name="Soderblom E.J."/>
            <person name="Goshe M.B."/>
            <person name="Boss W.F."/>
        </authorList>
    </citation>
    <scope>GENE FAMILY</scope>
</reference>
<sequence>MNCLATTIIITCKPTLISDMAVAIDPFSDKFPYFNRSSQRCRLQSLTNLDFNFLAQSFNHTFEDDNIHRSVSSPCFSIAASANMEEDLKATTAPRIEILGGQRVPTVRALVAEVTMAMVSGAQPLLLPSGMGGAYLLQTGKGHNIAVAKPVDEEPLAFNNPKKSGNLMLGQPGMKHSIPVGETGIRELAAYLLDYQGFSGVPPTALVSISHVPFHVSDAFSFSSMPYKVASLQRFVGHDFDAGELGPGSFTATSVHRIGILDVRLLNLDRHAGNMLVKRCDKKEAYNRLGTAELVPIDHGLCLPECLDDPYFEWLNWPQALVPFSDTELDYISNLDPFKDAELLRTELHSLPESAIRVLVVCTVFLKQAAAAGLCLAEIGEKMTRDFSKGEESFSLLETLCTKAKASVFGKTSEDSDYSHEGNEVNTELQCGMFKFDGGDTPCEAEISEVFHVSKPPLVPRGPRANTIPNDVTASMSSSQNQRITHQEKSAKEKKRGGKQERCTVRSKSPPISPNHDESKGVSFVDMTTVEWDTFLQSFQTLLQDALSKGSTPRLGCSCEI</sequence>
<comment type="function">
    <text evidence="1">The phosphorylation of phosphatidylinositol (PI) to PI4P is the first committed step in the generation of phosphatidylinositol 4,5-bisphosphate (PIP2), a precursor of the second messenger inositol 1,4,5-trisphosphate (InsP3).</text>
</comment>
<comment type="catalytic activity">
    <reaction>
        <text>a 1,2-diacyl-sn-glycero-3-phospho-(1D-myo-inositol) + ATP = a 1,2-diacyl-sn-glycero-3-phospho-(1D-myo-inositol 4-phosphate) + ADP + H(+)</text>
        <dbReference type="Rhea" id="RHEA:19877"/>
        <dbReference type="ChEBI" id="CHEBI:15378"/>
        <dbReference type="ChEBI" id="CHEBI:30616"/>
        <dbReference type="ChEBI" id="CHEBI:57880"/>
        <dbReference type="ChEBI" id="CHEBI:58178"/>
        <dbReference type="ChEBI" id="CHEBI:456216"/>
        <dbReference type="EC" id="2.7.1.67"/>
    </reaction>
</comment>
<comment type="similarity">
    <text evidence="5">Belongs to the PI3/PI4-kinase family. Type II PI4K subfamily.</text>
</comment>
<name>P4KG1_ARATH</name>
<keyword id="KW-0067">ATP-binding</keyword>
<keyword id="KW-0418">Kinase</keyword>
<keyword id="KW-0547">Nucleotide-binding</keyword>
<keyword id="KW-1185">Reference proteome</keyword>
<keyword id="KW-0808">Transferase</keyword>
<organism>
    <name type="scientific">Arabidopsis thaliana</name>
    <name type="common">Mouse-ear cress</name>
    <dbReference type="NCBI Taxonomy" id="3702"/>
    <lineage>
        <taxon>Eukaryota</taxon>
        <taxon>Viridiplantae</taxon>
        <taxon>Streptophyta</taxon>
        <taxon>Embryophyta</taxon>
        <taxon>Tracheophyta</taxon>
        <taxon>Spermatophyta</taxon>
        <taxon>Magnoliopsida</taxon>
        <taxon>eudicotyledons</taxon>
        <taxon>Gunneridae</taxon>
        <taxon>Pentapetalae</taxon>
        <taxon>rosids</taxon>
        <taxon>malvids</taxon>
        <taxon>Brassicales</taxon>
        <taxon>Brassicaceae</taxon>
        <taxon>Camelineae</taxon>
        <taxon>Arabidopsis</taxon>
    </lineage>
</organism>
<dbReference type="EC" id="2.7.1.67"/>
<dbReference type="EMBL" id="AC002409">
    <property type="protein sequence ID" value="AAB86445.1"/>
    <property type="molecule type" value="Genomic_DNA"/>
</dbReference>
<dbReference type="EMBL" id="CP002685">
    <property type="protein sequence ID" value="AEC09890.1"/>
    <property type="molecule type" value="Genomic_DNA"/>
</dbReference>
<dbReference type="EMBL" id="AY078924">
    <property type="protein sequence ID" value="AAL84930.1"/>
    <property type="molecule type" value="mRNA"/>
</dbReference>
<dbReference type="PIR" id="T00749">
    <property type="entry name" value="T00749"/>
</dbReference>
<dbReference type="SMR" id="O22199"/>
<dbReference type="FunCoup" id="O22199">
    <property type="interactions" value="555"/>
</dbReference>
<dbReference type="STRING" id="3702.O22199"/>
<dbReference type="iPTMnet" id="O22199"/>
<dbReference type="PaxDb" id="3702-AT2G40850.1"/>
<dbReference type="ProteomicsDB" id="251345"/>
<dbReference type="EnsemblPlants" id="AT2G40850.1">
    <property type="protein sequence ID" value="AT2G40850.1"/>
    <property type="gene ID" value="AT2G40850"/>
</dbReference>
<dbReference type="GeneID" id="818683"/>
<dbReference type="Gramene" id="AT2G40850.1">
    <property type="protein sequence ID" value="AT2G40850.1"/>
    <property type="gene ID" value="AT2G40850"/>
</dbReference>
<dbReference type="KEGG" id="ath:AT2G40850"/>
<dbReference type="Araport" id="AT2G40850"/>
<dbReference type="TAIR" id="AT2G40850">
    <property type="gene designation" value="PI4K GAMMA 1"/>
</dbReference>
<dbReference type="eggNOG" id="KOG2381">
    <property type="taxonomic scope" value="Eukaryota"/>
</dbReference>
<dbReference type="HOGENOM" id="CLU_027241_1_1_1"/>
<dbReference type="InParanoid" id="O22199"/>
<dbReference type="OMA" id="DQHHGFR"/>
<dbReference type="PhylomeDB" id="O22199"/>
<dbReference type="PRO" id="PR:O22199"/>
<dbReference type="Proteomes" id="UP000006548">
    <property type="component" value="Chromosome 2"/>
</dbReference>
<dbReference type="ExpressionAtlas" id="O22199">
    <property type="expression patterns" value="baseline and differential"/>
</dbReference>
<dbReference type="GO" id="GO:0005829">
    <property type="term" value="C:cytosol"/>
    <property type="evidence" value="ECO:0007005"/>
    <property type="project" value="TAIR"/>
</dbReference>
<dbReference type="GO" id="GO:0004430">
    <property type="term" value="F:1-phosphatidylinositol 4-kinase activity"/>
    <property type="evidence" value="ECO:0007669"/>
    <property type="project" value="UniProtKB-EC"/>
</dbReference>
<dbReference type="GO" id="GO:0005524">
    <property type="term" value="F:ATP binding"/>
    <property type="evidence" value="ECO:0007669"/>
    <property type="project" value="UniProtKB-KW"/>
</dbReference>
<dbReference type="InterPro" id="IPR044571">
    <property type="entry name" value="P4KG1-8"/>
</dbReference>
<dbReference type="InterPro" id="IPR000403">
    <property type="entry name" value="PI3/4_kinase_cat_dom"/>
</dbReference>
<dbReference type="PANTHER" id="PTHR45800">
    <property type="entry name" value="PHOSPHATIDYLINOSITOL 4-KINASE GAMMA"/>
    <property type="match status" value="1"/>
</dbReference>
<dbReference type="PANTHER" id="PTHR45800:SF14">
    <property type="entry name" value="PHOSPHATIDYLINOSITOL 4-KINASE GAMMA 1"/>
    <property type="match status" value="1"/>
</dbReference>
<dbReference type="Pfam" id="PF00454">
    <property type="entry name" value="PI3_PI4_kinase"/>
    <property type="match status" value="1"/>
</dbReference>
<dbReference type="PROSITE" id="PS50290">
    <property type="entry name" value="PI3_4_KINASE_3"/>
    <property type="match status" value="1"/>
</dbReference>